<organism>
    <name type="scientific">Oryza sativa subsp. indica</name>
    <name type="common">Rice</name>
    <dbReference type="NCBI Taxonomy" id="39946"/>
    <lineage>
        <taxon>Eukaryota</taxon>
        <taxon>Viridiplantae</taxon>
        <taxon>Streptophyta</taxon>
        <taxon>Embryophyta</taxon>
        <taxon>Tracheophyta</taxon>
        <taxon>Spermatophyta</taxon>
        <taxon>Magnoliopsida</taxon>
        <taxon>Liliopsida</taxon>
        <taxon>Poales</taxon>
        <taxon>Poaceae</taxon>
        <taxon>BOP clade</taxon>
        <taxon>Oryzoideae</taxon>
        <taxon>Oryzeae</taxon>
        <taxon>Oryzinae</taxon>
        <taxon>Oryza</taxon>
        <taxon>Oryza sativa</taxon>
    </lineage>
</organism>
<reference key="1">
    <citation type="journal article" date="1990" name="Plant Mol. Biol.">
        <title>Four tightly linked rab genes are differentially expressed in rice.</title>
        <authorList>
            <person name="Yamaguchi-Shinozaki K."/>
            <person name="Mundy J."/>
            <person name="Chua N.-H."/>
        </authorList>
    </citation>
    <scope>NUCLEOTIDE SEQUENCE [GENOMIC DNA]</scope>
    <scope>INDUCTION</scope>
    <source>
        <strain>cv. IR36</strain>
        <tissue>Seed</tissue>
    </source>
</reference>
<reference key="2">
    <citation type="journal article" date="2005" name="PLoS Biol.">
        <title>The genomes of Oryza sativa: a history of duplications.</title>
        <authorList>
            <person name="Yu J."/>
            <person name="Wang J."/>
            <person name="Lin W."/>
            <person name="Li S."/>
            <person name="Li H."/>
            <person name="Zhou J."/>
            <person name="Ni P."/>
            <person name="Dong W."/>
            <person name="Hu S."/>
            <person name="Zeng C."/>
            <person name="Zhang J."/>
            <person name="Zhang Y."/>
            <person name="Li R."/>
            <person name="Xu Z."/>
            <person name="Li S."/>
            <person name="Li X."/>
            <person name="Zheng H."/>
            <person name="Cong L."/>
            <person name="Lin L."/>
            <person name="Yin J."/>
            <person name="Geng J."/>
            <person name="Li G."/>
            <person name="Shi J."/>
            <person name="Liu J."/>
            <person name="Lv H."/>
            <person name="Li J."/>
            <person name="Wang J."/>
            <person name="Deng Y."/>
            <person name="Ran L."/>
            <person name="Shi X."/>
            <person name="Wang X."/>
            <person name="Wu Q."/>
            <person name="Li C."/>
            <person name="Ren X."/>
            <person name="Wang J."/>
            <person name="Wang X."/>
            <person name="Li D."/>
            <person name="Liu D."/>
            <person name="Zhang X."/>
            <person name="Ji Z."/>
            <person name="Zhao W."/>
            <person name="Sun Y."/>
            <person name="Zhang Z."/>
            <person name="Bao J."/>
            <person name="Han Y."/>
            <person name="Dong L."/>
            <person name="Ji J."/>
            <person name="Chen P."/>
            <person name="Wu S."/>
            <person name="Liu J."/>
            <person name="Xiao Y."/>
            <person name="Bu D."/>
            <person name="Tan J."/>
            <person name="Yang L."/>
            <person name="Ye C."/>
            <person name="Zhang J."/>
            <person name="Xu J."/>
            <person name="Zhou Y."/>
            <person name="Yu Y."/>
            <person name="Zhang B."/>
            <person name="Zhuang S."/>
            <person name="Wei H."/>
            <person name="Liu B."/>
            <person name="Lei M."/>
            <person name="Yu H."/>
            <person name="Li Y."/>
            <person name="Xu H."/>
            <person name="Wei S."/>
            <person name="He X."/>
            <person name="Fang L."/>
            <person name="Zhang Z."/>
            <person name="Zhang Y."/>
            <person name="Huang X."/>
            <person name="Su Z."/>
            <person name="Tong W."/>
            <person name="Li J."/>
            <person name="Tong Z."/>
            <person name="Li S."/>
            <person name="Ye J."/>
            <person name="Wang L."/>
            <person name="Fang L."/>
            <person name="Lei T."/>
            <person name="Chen C.-S."/>
            <person name="Chen H.-C."/>
            <person name="Xu Z."/>
            <person name="Li H."/>
            <person name="Huang H."/>
            <person name="Zhang F."/>
            <person name="Xu H."/>
            <person name="Li N."/>
            <person name="Zhao C."/>
            <person name="Li S."/>
            <person name="Dong L."/>
            <person name="Huang Y."/>
            <person name="Li L."/>
            <person name="Xi Y."/>
            <person name="Qi Q."/>
            <person name="Li W."/>
            <person name="Zhang B."/>
            <person name="Hu W."/>
            <person name="Zhang Y."/>
            <person name="Tian X."/>
            <person name="Jiao Y."/>
            <person name="Liang X."/>
            <person name="Jin J."/>
            <person name="Gao L."/>
            <person name="Zheng W."/>
            <person name="Hao B."/>
            <person name="Liu S.-M."/>
            <person name="Wang W."/>
            <person name="Yuan L."/>
            <person name="Cao M."/>
            <person name="McDermott J."/>
            <person name="Samudrala R."/>
            <person name="Wang J."/>
            <person name="Wong G.K.-S."/>
            <person name="Yang H."/>
        </authorList>
    </citation>
    <scope>NUCLEOTIDE SEQUENCE [LARGE SCALE GENOMIC DNA]</scope>
    <source>
        <strain>cv. 93-11</strain>
    </source>
</reference>
<comment type="induction">
    <text evidence="2">By abscisic acid (ABA) and water stress.</text>
</comment>
<comment type="similarity">
    <text evidence="3">Belongs to the plant dehydrin family.</text>
</comment>
<sequence>MENYQGQHGYGADRVDVYGNPVGAGQYGGGATAPGGGHGAMGMGGHAGAGAGGQFQPAREDRKTGGILHRSGSSSSSSSSEDDGMGGRRKKGIKEKIKEKLPGGNKGNNQQQQQMMGNTGGAYGQQGHAGMTGAGTGVHGAEYGNAGEKKGFMDKIKEKLPGQH</sequence>
<keyword id="KW-1185">Reference proteome</keyword>
<keyword id="KW-0346">Stress response</keyword>
<proteinExistence type="evidence at transcript level"/>
<dbReference type="EMBL" id="X52422">
    <property type="status" value="NOT_ANNOTATED_CDS"/>
    <property type="molecule type" value="Genomic_DNA"/>
</dbReference>
<dbReference type="EMBL" id="CM000136">
    <property type="protein sequence ID" value="EAY80812.1"/>
    <property type="molecule type" value="Genomic_DNA"/>
</dbReference>
<dbReference type="PIR" id="S11846">
    <property type="entry name" value="S11846"/>
</dbReference>
<dbReference type="STRING" id="39946.A2ZDX8"/>
<dbReference type="EnsemblPlants" id="OsGoSa_11g0012870.01">
    <property type="protein sequence ID" value="OsGoSa_11g0012870.01"/>
    <property type="gene ID" value="OsGoSa_11g0012870"/>
</dbReference>
<dbReference type="EnsemblPlants" id="OsIR64_11g0013070.01">
    <property type="protein sequence ID" value="OsIR64_11g0013070.01"/>
    <property type="gene ID" value="OsIR64_11g0013070"/>
</dbReference>
<dbReference type="EnsemblPlants" id="OsKYG_11g0013240.01">
    <property type="protein sequence ID" value="OsKYG_11g0013240.01"/>
    <property type="gene ID" value="OsKYG_11g0013240"/>
</dbReference>
<dbReference type="EnsemblPlants" id="OsLaMu_11g0013060.01">
    <property type="protein sequence ID" value="OsLaMu_11g0013060.01"/>
    <property type="gene ID" value="OsLaMu_11g0013060"/>
</dbReference>
<dbReference type="EnsemblPlants" id="OsLima_11g0013150.01">
    <property type="protein sequence ID" value="OsLima_11g0013150.01"/>
    <property type="gene ID" value="OsLima_11g0013150"/>
</dbReference>
<dbReference type="EnsemblPlants" id="OsLiXu_Ung0074740.02">
    <property type="protein sequence ID" value="OsLiXu_Ung0074740.02"/>
    <property type="gene ID" value="OsLiXu_Ung0074740"/>
</dbReference>
<dbReference type="EnsemblPlants" id="OsMH63_11G013510_01">
    <property type="protein sequence ID" value="OsMH63_11G013510_01"/>
    <property type="gene ID" value="OsMH63_11G013510"/>
</dbReference>
<dbReference type="EnsemblPlants" id="OsPr106_11g0013110.03">
    <property type="protein sequence ID" value="OsPr106_11g0013110.03"/>
    <property type="gene ID" value="OsPr106_11g0013110"/>
</dbReference>
<dbReference type="EnsemblPlants" id="OsZS97_11G013070_01">
    <property type="protein sequence ID" value="OsZS97_11G013070_01"/>
    <property type="gene ID" value="OsZS97_11G013070"/>
</dbReference>
<dbReference type="Gramene" id="OsGoSa_11g0012870.01">
    <property type="protein sequence ID" value="OsGoSa_11g0012870.01"/>
    <property type="gene ID" value="OsGoSa_11g0012870"/>
</dbReference>
<dbReference type="Gramene" id="OsIR64_11g0013070.01">
    <property type="protein sequence ID" value="OsIR64_11g0013070.01"/>
    <property type="gene ID" value="OsIR64_11g0013070"/>
</dbReference>
<dbReference type="Gramene" id="OsKYG_11g0013240.01">
    <property type="protein sequence ID" value="OsKYG_11g0013240.01"/>
    <property type="gene ID" value="OsKYG_11g0013240"/>
</dbReference>
<dbReference type="Gramene" id="OsLaMu_11g0013060.01">
    <property type="protein sequence ID" value="OsLaMu_11g0013060.01"/>
    <property type="gene ID" value="OsLaMu_11g0013060"/>
</dbReference>
<dbReference type="Gramene" id="OsLima_11g0013150.01">
    <property type="protein sequence ID" value="OsLima_11g0013150.01"/>
    <property type="gene ID" value="OsLima_11g0013150"/>
</dbReference>
<dbReference type="Gramene" id="OsLiXu_Ung0074740.02">
    <property type="protein sequence ID" value="OsLiXu_Ung0074740.02"/>
    <property type="gene ID" value="OsLiXu_Ung0074740"/>
</dbReference>
<dbReference type="Gramene" id="OsMH63_11G013510_01">
    <property type="protein sequence ID" value="OsMH63_11G013510_01"/>
    <property type="gene ID" value="OsMH63_11G013510"/>
</dbReference>
<dbReference type="Gramene" id="OsPr106_11g0013110.03">
    <property type="protein sequence ID" value="OsPr106_11g0013110.03"/>
    <property type="gene ID" value="OsPr106_11g0013110"/>
</dbReference>
<dbReference type="Gramene" id="OsZS97_11G013070_01">
    <property type="protein sequence ID" value="OsZS97_11G013070_01"/>
    <property type="gene ID" value="OsZS97_11G013070"/>
</dbReference>
<dbReference type="HOGENOM" id="CLU_060028_1_0_1"/>
<dbReference type="OrthoDB" id="689118at2759"/>
<dbReference type="Proteomes" id="UP000007015">
    <property type="component" value="Chromosome 11"/>
</dbReference>
<dbReference type="GO" id="GO:0005829">
    <property type="term" value="C:cytosol"/>
    <property type="evidence" value="ECO:0007669"/>
    <property type="project" value="TreeGrafter"/>
</dbReference>
<dbReference type="GO" id="GO:0009631">
    <property type="term" value="P:cold acclimation"/>
    <property type="evidence" value="ECO:0007669"/>
    <property type="project" value="TreeGrafter"/>
</dbReference>
<dbReference type="GO" id="GO:0009737">
    <property type="term" value="P:response to abscisic acid"/>
    <property type="evidence" value="ECO:0007669"/>
    <property type="project" value="TreeGrafter"/>
</dbReference>
<dbReference type="GO" id="GO:0009414">
    <property type="term" value="P:response to water deprivation"/>
    <property type="evidence" value="ECO:0007669"/>
    <property type="project" value="TreeGrafter"/>
</dbReference>
<dbReference type="InterPro" id="IPR000167">
    <property type="entry name" value="Dehydrin"/>
</dbReference>
<dbReference type="InterPro" id="IPR030513">
    <property type="entry name" value="Dehydrin_CS"/>
</dbReference>
<dbReference type="PANTHER" id="PTHR33346:SF57">
    <property type="entry name" value="DEHYDRIN RAB16B"/>
    <property type="match status" value="1"/>
</dbReference>
<dbReference type="PANTHER" id="PTHR33346">
    <property type="entry name" value="DEHYDRIN XERO 2-RELATED"/>
    <property type="match status" value="1"/>
</dbReference>
<dbReference type="Pfam" id="PF00257">
    <property type="entry name" value="Dehydrin"/>
    <property type="match status" value="1"/>
</dbReference>
<dbReference type="PROSITE" id="PS00315">
    <property type="entry name" value="DEHYDRIN_1"/>
    <property type="match status" value="1"/>
</dbReference>
<dbReference type="PROSITE" id="PS00823">
    <property type="entry name" value="DEHYDRIN_2"/>
    <property type="match status" value="2"/>
</dbReference>
<feature type="chain" id="PRO_0000295013" description="Dehydrin Rab16B">
    <location>
        <begin position="1"/>
        <end position="164"/>
    </location>
</feature>
<feature type="region of interest" description="Disordered" evidence="1">
    <location>
        <begin position="1"/>
        <end position="164"/>
    </location>
</feature>
<feature type="compositionally biased region" description="Gly residues" evidence="1">
    <location>
        <begin position="25"/>
        <end position="53"/>
    </location>
</feature>
<feature type="compositionally biased region" description="Low complexity" evidence="1">
    <location>
        <begin position="107"/>
        <end position="117"/>
    </location>
</feature>
<feature type="compositionally biased region" description="Basic and acidic residues" evidence="1">
    <location>
        <begin position="147"/>
        <end position="164"/>
    </location>
</feature>
<feature type="sequence conflict" description="In Ref. 2; EAY80812." evidence="3" ref="2">
    <original>K</original>
    <variation>Q</variation>
    <location>
        <position position="98"/>
    </location>
</feature>
<feature type="sequence conflict" description="In Ref. 2; EAY80812." evidence="3" ref="2">
    <original>P</original>
    <variation>A</variation>
    <location>
        <position position="102"/>
    </location>
</feature>
<accession>A2ZDX8</accession>
<accession>P22911</accession>
<accession>Q53L94</accession>
<gene>
    <name type="primary">RAB16B</name>
    <name type="ORF">OsI_034771</name>
</gene>
<protein>
    <recommendedName>
        <fullName>Dehydrin Rab16B</fullName>
    </recommendedName>
</protein>
<name>DH16B_ORYSI</name>
<evidence type="ECO:0000256" key="1">
    <source>
        <dbReference type="SAM" id="MobiDB-lite"/>
    </source>
</evidence>
<evidence type="ECO:0000269" key="2">
    <source>
    </source>
</evidence>
<evidence type="ECO:0000305" key="3"/>